<sequence length="667" mass="76125">MIDRVDNNHFDLVSDYQPTGDQPQAIQQLTAGIESGEKEQILLGATGTGKTFTISNVIAKVNKPTLILSHNKTLAGQLYGEFKKFFPNNAVEYFVSYYDYYQPEAYVPSSDTYIEKDSAINDEIDKLRHSATSSLLERNDVIVVASVSSIFGLGDPHEYQDHVVSLRVGMEIDRNDLLRKLVDIQFDRNDIDFQRGRFRVHGDVVEIFPASRDDHALRVEFFGDEIDRIREIDALTGEIVADREHVAIFPATHFMTNDAIMEHAIKGIEDELDGRLKELTADGKLLEAQRLKQRTTYDVEMLKEMGYTSGIENYSRFMDGRKPGEPPYTLLDFFPKDFLLVVDESHVTMPQVRGMYNGDRARKQMLVDYGFRLPSALDNRPLKLEEVEQHINQVVYMSATPGPYEMDRTKHVVQQIIRPTGLLDPTIEVRPIMGQIDDLVGEINKRIEVNERVFITTLTKKMAEDLTDYFKDLGIKVRYLHSDIKTLERTQIIRDLRLGKFDVLVGINLLREGIDVPEVSLVAILDADKEGFLRNERSLIQTIGRAARNEHGSVIMYADTTTDSMQAAMDETARRRAVQMKYNEDHHITPHTIKKAIPELIASTKTTEDAGKKDDFLETDFDDMTREQQLDMISKLEEQMKTAAKKLDFEQAATLRDTVMELKAQIS</sequence>
<proteinExistence type="inferred from homology"/>
<dbReference type="EMBL" id="AL935263">
    <property type="protein sequence ID" value="CCC78235.1"/>
    <property type="molecule type" value="Genomic_DNA"/>
</dbReference>
<dbReference type="RefSeq" id="WP_003641029.1">
    <property type="nucleotide sequence ID" value="NC_004567.2"/>
</dbReference>
<dbReference type="RefSeq" id="YP_004888749.1">
    <property type="nucleotide sequence ID" value="NC_004567.2"/>
</dbReference>
<dbReference type="SMR" id="Q88YI8"/>
<dbReference type="STRING" id="220668.lp_0772"/>
<dbReference type="EnsemblBacteria" id="CCC78235">
    <property type="protein sequence ID" value="CCC78235"/>
    <property type="gene ID" value="lp_0772"/>
</dbReference>
<dbReference type="GeneID" id="77217296"/>
<dbReference type="KEGG" id="lpl:lp_0772"/>
<dbReference type="PATRIC" id="fig|220668.9.peg.652"/>
<dbReference type="eggNOG" id="COG0556">
    <property type="taxonomic scope" value="Bacteria"/>
</dbReference>
<dbReference type="HOGENOM" id="CLU_009621_2_1_9"/>
<dbReference type="OrthoDB" id="9806651at2"/>
<dbReference type="PhylomeDB" id="Q88YI8"/>
<dbReference type="Proteomes" id="UP000000432">
    <property type="component" value="Chromosome"/>
</dbReference>
<dbReference type="GO" id="GO:0005737">
    <property type="term" value="C:cytoplasm"/>
    <property type="evidence" value="ECO:0007669"/>
    <property type="project" value="UniProtKB-SubCell"/>
</dbReference>
<dbReference type="GO" id="GO:0009380">
    <property type="term" value="C:excinuclease repair complex"/>
    <property type="evidence" value="ECO:0007669"/>
    <property type="project" value="InterPro"/>
</dbReference>
<dbReference type="GO" id="GO:0005524">
    <property type="term" value="F:ATP binding"/>
    <property type="evidence" value="ECO:0007669"/>
    <property type="project" value="UniProtKB-UniRule"/>
</dbReference>
<dbReference type="GO" id="GO:0016887">
    <property type="term" value="F:ATP hydrolysis activity"/>
    <property type="evidence" value="ECO:0007669"/>
    <property type="project" value="InterPro"/>
</dbReference>
<dbReference type="GO" id="GO:0003677">
    <property type="term" value="F:DNA binding"/>
    <property type="evidence" value="ECO:0007669"/>
    <property type="project" value="UniProtKB-UniRule"/>
</dbReference>
<dbReference type="GO" id="GO:0009381">
    <property type="term" value="F:excinuclease ABC activity"/>
    <property type="evidence" value="ECO:0007669"/>
    <property type="project" value="UniProtKB-UniRule"/>
</dbReference>
<dbReference type="GO" id="GO:0006289">
    <property type="term" value="P:nucleotide-excision repair"/>
    <property type="evidence" value="ECO:0007669"/>
    <property type="project" value="UniProtKB-UniRule"/>
</dbReference>
<dbReference type="GO" id="GO:0009432">
    <property type="term" value="P:SOS response"/>
    <property type="evidence" value="ECO:0007669"/>
    <property type="project" value="UniProtKB-UniRule"/>
</dbReference>
<dbReference type="CDD" id="cd17916">
    <property type="entry name" value="DEXHc_UvrB"/>
    <property type="match status" value="1"/>
</dbReference>
<dbReference type="CDD" id="cd18790">
    <property type="entry name" value="SF2_C_UvrB"/>
    <property type="match status" value="1"/>
</dbReference>
<dbReference type="Gene3D" id="3.40.50.300">
    <property type="entry name" value="P-loop containing nucleotide triphosphate hydrolases"/>
    <property type="match status" value="3"/>
</dbReference>
<dbReference type="Gene3D" id="4.10.860.10">
    <property type="entry name" value="UVR domain"/>
    <property type="match status" value="1"/>
</dbReference>
<dbReference type="HAMAP" id="MF_00204">
    <property type="entry name" value="UvrB"/>
    <property type="match status" value="1"/>
</dbReference>
<dbReference type="InterPro" id="IPR006935">
    <property type="entry name" value="Helicase/UvrB_N"/>
</dbReference>
<dbReference type="InterPro" id="IPR014001">
    <property type="entry name" value="Helicase_ATP-bd"/>
</dbReference>
<dbReference type="InterPro" id="IPR001650">
    <property type="entry name" value="Helicase_C-like"/>
</dbReference>
<dbReference type="InterPro" id="IPR027417">
    <property type="entry name" value="P-loop_NTPase"/>
</dbReference>
<dbReference type="InterPro" id="IPR001943">
    <property type="entry name" value="UVR_dom"/>
</dbReference>
<dbReference type="InterPro" id="IPR036876">
    <property type="entry name" value="UVR_dom_sf"/>
</dbReference>
<dbReference type="InterPro" id="IPR004807">
    <property type="entry name" value="UvrB"/>
</dbReference>
<dbReference type="InterPro" id="IPR041471">
    <property type="entry name" value="UvrB_inter"/>
</dbReference>
<dbReference type="InterPro" id="IPR024759">
    <property type="entry name" value="UvrB_YAD/RRR_dom"/>
</dbReference>
<dbReference type="NCBIfam" id="NF003673">
    <property type="entry name" value="PRK05298.1"/>
    <property type="match status" value="1"/>
</dbReference>
<dbReference type="NCBIfam" id="TIGR00631">
    <property type="entry name" value="uvrb"/>
    <property type="match status" value="1"/>
</dbReference>
<dbReference type="PANTHER" id="PTHR24029">
    <property type="entry name" value="UVRABC SYSTEM PROTEIN B"/>
    <property type="match status" value="1"/>
</dbReference>
<dbReference type="PANTHER" id="PTHR24029:SF0">
    <property type="entry name" value="UVRABC SYSTEM PROTEIN B"/>
    <property type="match status" value="1"/>
</dbReference>
<dbReference type="Pfam" id="PF00271">
    <property type="entry name" value="Helicase_C"/>
    <property type="match status" value="1"/>
</dbReference>
<dbReference type="Pfam" id="PF04851">
    <property type="entry name" value="ResIII"/>
    <property type="match status" value="1"/>
</dbReference>
<dbReference type="Pfam" id="PF02151">
    <property type="entry name" value="UVR"/>
    <property type="match status" value="1"/>
</dbReference>
<dbReference type="Pfam" id="PF12344">
    <property type="entry name" value="UvrB"/>
    <property type="match status" value="1"/>
</dbReference>
<dbReference type="Pfam" id="PF17757">
    <property type="entry name" value="UvrB_inter"/>
    <property type="match status" value="1"/>
</dbReference>
<dbReference type="SMART" id="SM00487">
    <property type="entry name" value="DEXDc"/>
    <property type="match status" value="1"/>
</dbReference>
<dbReference type="SMART" id="SM00490">
    <property type="entry name" value="HELICc"/>
    <property type="match status" value="1"/>
</dbReference>
<dbReference type="SUPFAM" id="SSF46600">
    <property type="entry name" value="C-terminal UvrC-binding domain of UvrB"/>
    <property type="match status" value="1"/>
</dbReference>
<dbReference type="SUPFAM" id="SSF52540">
    <property type="entry name" value="P-loop containing nucleoside triphosphate hydrolases"/>
    <property type="match status" value="2"/>
</dbReference>
<dbReference type="PROSITE" id="PS51192">
    <property type="entry name" value="HELICASE_ATP_BIND_1"/>
    <property type="match status" value="1"/>
</dbReference>
<dbReference type="PROSITE" id="PS51194">
    <property type="entry name" value="HELICASE_CTER"/>
    <property type="match status" value="1"/>
</dbReference>
<dbReference type="PROSITE" id="PS50151">
    <property type="entry name" value="UVR"/>
    <property type="match status" value="1"/>
</dbReference>
<evidence type="ECO:0000255" key="1">
    <source>
        <dbReference type="HAMAP-Rule" id="MF_00204"/>
    </source>
</evidence>
<feature type="chain" id="PRO_0000138399" description="UvrABC system protein B">
    <location>
        <begin position="1"/>
        <end position="667"/>
    </location>
</feature>
<feature type="domain" description="Helicase ATP-binding" evidence="1">
    <location>
        <begin position="31"/>
        <end position="414"/>
    </location>
</feature>
<feature type="domain" description="Helicase C-terminal" evidence="1">
    <location>
        <begin position="435"/>
        <end position="597"/>
    </location>
</feature>
<feature type="domain" description="UVR" evidence="1">
    <location>
        <begin position="630"/>
        <end position="665"/>
    </location>
</feature>
<feature type="short sequence motif" description="Beta-hairpin">
    <location>
        <begin position="97"/>
        <end position="120"/>
    </location>
</feature>
<feature type="binding site" evidence="1">
    <location>
        <begin position="44"/>
        <end position="51"/>
    </location>
    <ligand>
        <name>ATP</name>
        <dbReference type="ChEBI" id="CHEBI:30616"/>
    </ligand>
</feature>
<reference key="1">
    <citation type="journal article" date="2003" name="Proc. Natl. Acad. Sci. U.S.A.">
        <title>Complete genome sequence of Lactobacillus plantarum WCFS1.</title>
        <authorList>
            <person name="Kleerebezem M."/>
            <person name="Boekhorst J."/>
            <person name="van Kranenburg R."/>
            <person name="Molenaar D."/>
            <person name="Kuipers O.P."/>
            <person name="Leer R."/>
            <person name="Tarchini R."/>
            <person name="Peters S.A."/>
            <person name="Sandbrink H.M."/>
            <person name="Fiers M.W.E.J."/>
            <person name="Stiekema W."/>
            <person name="Klein Lankhorst R.M."/>
            <person name="Bron P.A."/>
            <person name="Hoffer S.M."/>
            <person name="Nierop Groot M.N."/>
            <person name="Kerkhoven R."/>
            <person name="De Vries M."/>
            <person name="Ursing B."/>
            <person name="De Vos W.M."/>
            <person name="Siezen R.J."/>
        </authorList>
    </citation>
    <scope>NUCLEOTIDE SEQUENCE [LARGE SCALE GENOMIC DNA]</scope>
    <source>
        <strain>ATCC BAA-793 / NCIMB 8826 / WCFS1</strain>
    </source>
</reference>
<reference key="2">
    <citation type="journal article" date="2012" name="J. Bacteriol.">
        <title>Complete resequencing and reannotation of the Lactobacillus plantarum WCFS1 genome.</title>
        <authorList>
            <person name="Siezen R.J."/>
            <person name="Francke C."/>
            <person name="Renckens B."/>
            <person name="Boekhorst J."/>
            <person name="Wels M."/>
            <person name="Kleerebezem M."/>
            <person name="van Hijum S.A."/>
        </authorList>
    </citation>
    <scope>NUCLEOTIDE SEQUENCE [LARGE SCALE GENOMIC DNA]</scope>
    <scope>GENOME REANNOTATION</scope>
    <source>
        <strain>ATCC BAA-793 / NCIMB 8826 / WCFS1</strain>
    </source>
</reference>
<gene>
    <name evidence="1" type="primary">uvrB</name>
    <name type="ordered locus">lp_0772</name>
</gene>
<protein>
    <recommendedName>
        <fullName evidence="1">UvrABC system protein B</fullName>
        <shortName evidence="1">Protein UvrB</shortName>
    </recommendedName>
    <alternativeName>
        <fullName evidence="1">Excinuclease ABC subunit B</fullName>
    </alternativeName>
</protein>
<comment type="function">
    <text evidence="1">The UvrABC repair system catalyzes the recognition and processing of DNA lesions. A damage recognition complex composed of 2 UvrA and 2 UvrB subunits scans DNA for abnormalities. Upon binding of the UvrA(2)B(2) complex to a putative damaged site, the DNA wraps around one UvrB monomer. DNA wrap is dependent on ATP binding by UvrB and probably causes local melting of the DNA helix, facilitating insertion of UvrB beta-hairpin between the DNA strands. Then UvrB probes one DNA strand for the presence of a lesion. If a lesion is found the UvrA subunits dissociate and the UvrB-DNA preincision complex is formed. This complex is subsequently bound by UvrC and the second UvrB is released. If no lesion is found, the DNA wraps around the other UvrB subunit that will check the other stand for damage.</text>
</comment>
<comment type="subunit">
    <text evidence="1">Forms a heterotetramer with UvrA during the search for lesions. Interacts with UvrC in an incision complex.</text>
</comment>
<comment type="subcellular location">
    <subcellularLocation>
        <location evidence="1">Cytoplasm</location>
    </subcellularLocation>
</comment>
<comment type="domain">
    <text evidence="1">The beta-hairpin motif is involved in DNA binding.</text>
</comment>
<comment type="similarity">
    <text evidence="1">Belongs to the UvrB family.</text>
</comment>
<name>UVRB_LACPL</name>
<accession>Q88YI8</accession>
<accession>F9ULZ6</accession>
<organism>
    <name type="scientific">Lactiplantibacillus plantarum (strain ATCC BAA-793 / NCIMB 8826 / WCFS1)</name>
    <name type="common">Lactobacillus plantarum</name>
    <dbReference type="NCBI Taxonomy" id="220668"/>
    <lineage>
        <taxon>Bacteria</taxon>
        <taxon>Bacillati</taxon>
        <taxon>Bacillota</taxon>
        <taxon>Bacilli</taxon>
        <taxon>Lactobacillales</taxon>
        <taxon>Lactobacillaceae</taxon>
        <taxon>Lactiplantibacillus</taxon>
    </lineage>
</organism>
<keyword id="KW-0067">ATP-binding</keyword>
<keyword id="KW-0963">Cytoplasm</keyword>
<keyword id="KW-0227">DNA damage</keyword>
<keyword id="KW-0228">DNA excision</keyword>
<keyword id="KW-0234">DNA repair</keyword>
<keyword id="KW-0267">Excision nuclease</keyword>
<keyword id="KW-0547">Nucleotide-binding</keyword>
<keyword id="KW-1185">Reference proteome</keyword>
<keyword id="KW-0742">SOS response</keyword>